<evidence type="ECO:0000250" key="1">
    <source>
        <dbReference type="UniProtKB" id="Q86WR0"/>
    </source>
</evidence>
<evidence type="ECO:0000255" key="2"/>
<evidence type="ECO:0000256" key="3">
    <source>
        <dbReference type="SAM" id="MobiDB-lite"/>
    </source>
</evidence>
<evidence type="ECO:0000269" key="4">
    <source>
    </source>
</evidence>
<evidence type="ECO:0000303" key="5">
    <source ref="2"/>
</evidence>
<evidence type="ECO:0000305" key="6"/>
<keyword id="KW-1003">Cell membrane</keyword>
<keyword id="KW-0175">Coiled coil</keyword>
<keyword id="KW-0238">DNA-binding</keyword>
<keyword id="KW-0472">Membrane</keyword>
<keyword id="KW-0597">Phosphoprotein</keyword>
<keyword id="KW-1185">Reference proteome</keyword>
<keyword id="KW-0812">Transmembrane</keyword>
<keyword id="KW-1133">Transmembrane helix</keyword>
<gene>
    <name evidence="1" type="primary">ccdc25</name>
    <name evidence="5" type="ORF">zgc:64173</name>
</gene>
<reference key="1">
    <citation type="journal article" date="2013" name="Nature">
        <title>The zebrafish reference genome sequence and its relationship to the human genome.</title>
        <authorList>
            <person name="Howe K."/>
            <person name="Clark M.D."/>
            <person name="Torroja C.F."/>
            <person name="Torrance J."/>
            <person name="Berthelot C."/>
            <person name="Muffato M."/>
            <person name="Collins J.E."/>
            <person name="Humphray S."/>
            <person name="McLaren K."/>
            <person name="Matthews L."/>
            <person name="McLaren S."/>
            <person name="Sealy I."/>
            <person name="Caccamo M."/>
            <person name="Churcher C."/>
            <person name="Scott C."/>
            <person name="Barrett J.C."/>
            <person name="Koch R."/>
            <person name="Rauch G.J."/>
            <person name="White S."/>
            <person name="Chow W."/>
            <person name="Kilian B."/>
            <person name="Quintais L.T."/>
            <person name="Guerra-Assuncao J.A."/>
            <person name="Zhou Y."/>
            <person name="Gu Y."/>
            <person name="Yen J."/>
            <person name="Vogel J.H."/>
            <person name="Eyre T."/>
            <person name="Redmond S."/>
            <person name="Banerjee R."/>
            <person name="Chi J."/>
            <person name="Fu B."/>
            <person name="Langley E."/>
            <person name="Maguire S.F."/>
            <person name="Laird G.K."/>
            <person name="Lloyd D."/>
            <person name="Kenyon E."/>
            <person name="Donaldson S."/>
            <person name="Sehra H."/>
            <person name="Almeida-King J."/>
            <person name="Loveland J."/>
            <person name="Trevanion S."/>
            <person name="Jones M."/>
            <person name="Quail M."/>
            <person name="Willey D."/>
            <person name="Hunt A."/>
            <person name="Burton J."/>
            <person name="Sims S."/>
            <person name="McLay K."/>
            <person name="Plumb B."/>
            <person name="Davis J."/>
            <person name="Clee C."/>
            <person name="Oliver K."/>
            <person name="Clark R."/>
            <person name="Riddle C."/>
            <person name="Elliot D."/>
            <person name="Threadgold G."/>
            <person name="Harden G."/>
            <person name="Ware D."/>
            <person name="Begum S."/>
            <person name="Mortimore B."/>
            <person name="Kerry G."/>
            <person name="Heath P."/>
            <person name="Phillimore B."/>
            <person name="Tracey A."/>
            <person name="Corby N."/>
            <person name="Dunn M."/>
            <person name="Johnson C."/>
            <person name="Wood J."/>
            <person name="Clark S."/>
            <person name="Pelan S."/>
            <person name="Griffiths G."/>
            <person name="Smith M."/>
            <person name="Glithero R."/>
            <person name="Howden P."/>
            <person name="Barker N."/>
            <person name="Lloyd C."/>
            <person name="Stevens C."/>
            <person name="Harley J."/>
            <person name="Holt K."/>
            <person name="Panagiotidis G."/>
            <person name="Lovell J."/>
            <person name="Beasley H."/>
            <person name="Henderson C."/>
            <person name="Gordon D."/>
            <person name="Auger K."/>
            <person name="Wright D."/>
            <person name="Collins J."/>
            <person name="Raisen C."/>
            <person name="Dyer L."/>
            <person name="Leung K."/>
            <person name="Robertson L."/>
            <person name="Ambridge K."/>
            <person name="Leongamornlert D."/>
            <person name="McGuire S."/>
            <person name="Gilderthorp R."/>
            <person name="Griffiths C."/>
            <person name="Manthravadi D."/>
            <person name="Nichol S."/>
            <person name="Barker G."/>
            <person name="Whitehead S."/>
            <person name="Kay M."/>
            <person name="Brown J."/>
            <person name="Murnane C."/>
            <person name="Gray E."/>
            <person name="Humphries M."/>
            <person name="Sycamore N."/>
            <person name="Barker D."/>
            <person name="Saunders D."/>
            <person name="Wallis J."/>
            <person name="Babbage A."/>
            <person name="Hammond S."/>
            <person name="Mashreghi-Mohammadi M."/>
            <person name="Barr L."/>
            <person name="Martin S."/>
            <person name="Wray P."/>
            <person name="Ellington A."/>
            <person name="Matthews N."/>
            <person name="Ellwood M."/>
            <person name="Woodmansey R."/>
            <person name="Clark G."/>
            <person name="Cooper J."/>
            <person name="Tromans A."/>
            <person name="Grafham D."/>
            <person name="Skuce C."/>
            <person name="Pandian R."/>
            <person name="Andrews R."/>
            <person name="Harrison E."/>
            <person name="Kimberley A."/>
            <person name="Garnett J."/>
            <person name="Fosker N."/>
            <person name="Hall R."/>
            <person name="Garner P."/>
            <person name="Kelly D."/>
            <person name="Bird C."/>
            <person name="Palmer S."/>
            <person name="Gehring I."/>
            <person name="Berger A."/>
            <person name="Dooley C.M."/>
            <person name="Ersan-Urun Z."/>
            <person name="Eser C."/>
            <person name="Geiger H."/>
            <person name="Geisler M."/>
            <person name="Karotki L."/>
            <person name="Kirn A."/>
            <person name="Konantz J."/>
            <person name="Konantz M."/>
            <person name="Oberlander M."/>
            <person name="Rudolph-Geiger S."/>
            <person name="Teucke M."/>
            <person name="Lanz C."/>
            <person name="Raddatz G."/>
            <person name="Osoegawa K."/>
            <person name="Zhu B."/>
            <person name="Rapp A."/>
            <person name="Widaa S."/>
            <person name="Langford C."/>
            <person name="Yang F."/>
            <person name="Schuster S.C."/>
            <person name="Carter N.P."/>
            <person name="Harrow J."/>
            <person name="Ning Z."/>
            <person name="Herrero J."/>
            <person name="Searle S.M."/>
            <person name="Enright A."/>
            <person name="Geisler R."/>
            <person name="Plasterk R.H."/>
            <person name="Lee C."/>
            <person name="Westerfield M."/>
            <person name="de Jong P.J."/>
            <person name="Zon L.I."/>
            <person name="Postlethwait J.H."/>
            <person name="Nusslein-Volhard C."/>
            <person name="Hubbard T.J."/>
            <person name="Roest Crollius H."/>
            <person name="Rogers J."/>
            <person name="Stemple D.L."/>
        </authorList>
    </citation>
    <scope>NUCLEOTIDE SEQUENCE [LARGE SCALE GENOMIC DNA]</scope>
    <source>
        <strain>Tuebingen</strain>
    </source>
</reference>
<reference key="2">
    <citation type="submission" date="2003-06" db="EMBL/GenBank/DDBJ databases">
        <authorList>
            <consortium name="NIH - Zebrafish Gene Collection (ZGC) project"/>
        </authorList>
    </citation>
    <scope>NUCLEOTIDE SEQUENCE [LARGE SCALE MRNA]</scope>
    <source>
        <tissue>Kidney</tissue>
    </source>
</reference>
<reference key="3">
    <citation type="journal article" date="2008" name="J. Proteome Res.">
        <title>Online automated in vivo zebrafish phosphoproteomics: from large-scale analysis down to a single embryo.</title>
        <authorList>
            <person name="Lemeer S."/>
            <person name="Pinkse M.W.H."/>
            <person name="Mohammed S."/>
            <person name="van Breukelen B."/>
            <person name="den Hertog J."/>
            <person name="Slijper M."/>
            <person name="Heck A.J.R."/>
        </authorList>
    </citation>
    <scope>PHOSPHORYLATION [LARGE SCALE ANALYSIS] AT SER-203</scope>
    <scope>IDENTIFICATION BY MASS SPECTROMETRY</scope>
    <source>
        <tissue>Embryo</tissue>
    </source>
</reference>
<comment type="function">
    <text evidence="1">Transmembrane receptor that senses neutrophil extracellular traps (NETs) and triggers the ILK-PARVB pathway to enhance cell motility. NETs are mainly composed of DNA fibers and are released by neutrophils to bind pathogens during inflammation. Specifically binds NETs on its extracellular region, in particular the 8-OHdG-enriched DNA present in NETs, and recruits ILK, initiating the ILK-PARVB cascade to induce cytoskeleton rearrangement and directional migration of cells.</text>
</comment>
<comment type="subunit">
    <text evidence="1">Interacts (via cytoplasmic region) with ILK.</text>
</comment>
<comment type="subcellular location">
    <subcellularLocation>
        <location evidence="1">Cell membrane</location>
        <topology evidence="1">Single-pass membrane protein</topology>
    </subcellularLocation>
    <subcellularLocation>
        <location evidence="1">Endomembrane system</location>
    </subcellularLocation>
    <text evidence="1">Localizes to cytoplasmic membrane in tumor cells.</text>
</comment>
<comment type="similarity">
    <text evidence="6">Belongs to the CCDC25 family.</text>
</comment>
<sequence>MVFYFTSAVVSPPHTIYMGKDKYENEDLIKYGWPEDIWFHVDKLSSAHVYLRMPKGTTIDDIPKEVLIDCVQLVKNNSIQGCKMNNINIVYTPWSNLKKTADMDIGQIGFHRQKEVKIVAVEKKINEIVNRLEKTKEERYPDLAAEKESRDREERNEKKAQIQEQKKKEKEEVKKKKEMEDLKNYTSLMKSDNMTTNEDGYDSDDFM</sequence>
<name>CCD25_DANRE</name>
<organism>
    <name type="scientific">Danio rerio</name>
    <name type="common">Zebrafish</name>
    <name type="synonym">Brachydanio rerio</name>
    <dbReference type="NCBI Taxonomy" id="7955"/>
    <lineage>
        <taxon>Eukaryota</taxon>
        <taxon>Metazoa</taxon>
        <taxon>Chordata</taxon>
        <taxon>Craniata</taxon>
        <taxon>Vertebrata</taxon>
        <taxon>Euteleostomi</taxon>
        <taxon>Actinopterygii</taxon>
        <taxon>Neopterygii</taxon>
        <taxon>Teleostei</taxon>
        <taxon>Ostariophysi</taxon>
        <taxon>Cypriniformes</taxon>
        <taxon>Danionidae</taxon>
        <taxon>Danioninae</taxon>
        <taxon>Danio</taxon>
    </lineage>
</organism>
<protein>
    <recommendedName>
        <fullName evidence="6">Coiled-coil domain-containing protein 25</fullName>
    </recommendedName>
</protein>
<feature type="chain" id="PRO_0000233407" description="Coiled-coil domain-containing protein 25">
    <location>
        <begin position="1"/>
        <end position="207"/>
    </location>
</feature>
<feature type="topological domain" description="Extracellular" evidence="6">
    <location>
        <begin position="1"/>
        <end position="104"/>
    </location>
</feature>
<feature type="transmembrane region" description="Helical" evidence="2">
    <location>
        <begin position="105"/>
        <end position="121"/>
    </location>
</feature>
<feature type="topological domain" description="Cytoplasmic" evidence="6">
    <location>
        <begin position="122"/>
        <end position="207"/>
    </location>
</feature>
<feature type="region of interest" description="DNA-binding" evidence="1">
    <location>
        <begin position="20"/>
        <end position="24"/>
    </location>
</feature>
<feature type="region of interest" description="Disordered" evidence="3">
    <location>
        <begin position="140"/>
        <end position="207"/>
    </location>
</feature>
<feature type="coiled-coil region" evidence="2">
    <location>
        <begin position="112"/>
        <end position="189"/>
    </location>
</feature>
<feature type="compositionally biased region" description="Basic and acidic residues" evidence="3">
    <location>
        <begin position="140"/>
        <end position="183"/>
    </location>
</feature>
<feature type="compositionally biased region" description="Polar residues" evidence="3">
    <location>
        <begin position="184"/>
        <end position="198"/>
    </location>
</feature>
<feature type="modified residue" description="Phosphoserine" evidence="4">
    <location>
        <position position="203"/>
    </location>
</feature>
<accession>Q7T312</accession>
<dbReference type="EMBL" id="AL845306">
    <property type="protein sequence ID" value="CAI20930.1"/>
    <property type="molecule type" value="Genomic_DNA"/>
</dbReference>
<dbReference type="EMBL" id="BC053297">
    <property type="protein sequence ID" value="AAH53297.1"/>
    <property type="molecule type" value="mRNA"/>
</dbReference>
<dbReference type="RefSeq" id="NP_956682.1">
    <property type="nucleotide sequence ID" value="NM_200388.1"/>
</dbReference>
<dbReference type="SMR" id="Q7T312"/>
<dbReference type="FunCoup" id="Q7T312">
    <property type="interactions" value="2602"/>
</dbReference>
<dbReference type="STRING" id="7955.ENSDARP00000030117"/>
<dbReference type="iPTMnet" id="Q7T312"/>
<dbReference type="PaxDb" id="7955-ENSDARP00000030117"/>
<dbReference type="Ensembl" id="ENSDART00000037282">
    <property type="protein sequence ID" value="ENSDARP00000030117"/>
    <property type="gene ID" value="ENSDARG00000021753"/>
</dbReference>
<dbReference type="GeneID" id="393359"/>
<dbReference type="KEGG" id="dre:393359"/>
<dbReference type="AGR" id="ZFIN:ZDB-GENE-040426-1389"/>
<dbReference type="CTD" id="55246"/>
<dbReference type="ZFIN" id="ZDB-GENE-040426-1389">
    <property type="gene designation" value="ccdc25"/>
</dbReference>
<dbReference type="eggNOG" id="KOG3272">
    <property type="taxonomic scope" value="Eukaryota"/>
</dbReference>
<dbReference type="HOGENOM" id="CLU_076656_0_1_1"/>
<dbReference type="InParanoid" id="Q7T312"/>
<dbReference type="OMA" id="YHDEKAV"/>
<dbReference type="OrthoDB" id="200398at2759"/>
<dbReference type="PhylomeDB" id="Q7T312"/>
<dbReference type="TreeFam" id="TF300013"/>
<dbReference type="PRO" id="PR:Q7T312"/>
<dbReference type="Proteomes" id="UP000000437">
    <property type="component" value="Chromosome 20"/>
</dbReference>
<dbReference type="Bgee" id="ENSDARG00000021753">
    <property type="expression patterns" value="Expressed in spleen and 28 other cell types or tissues"/>
</dbReference>
<dbReference type="GO" id="GO:0012505">
    <property type="term" value="C:endomembrane system"/>
    <property type="evidence" value="ECO:0000250"/>
    <property type="project" value="UniProtKB"/>
</dbReference>
<dbReference type="GO" id="GO:0005886">
    <property type="term" value="C:plasma membrane"/>
    <property type="evidence" value="ECO:0000250"/>
    <property type="project" value="UniProtKB"/>
</dbReference>
<dbReference type="GO" id="GO:0003677">
    <property type="term" value="F:DNA binding"/>
    <property type="evidence" value="ECO:0000250"/>
    <property type="project" value="UniProtKB"/>
</dbReference>
<dbReference type="GO" id="GO:2000147">
    <property type="term" value="P:positive regulation of cell motility"/>
    <property type="evidence" value="ECO:0000250"/>
    <property type="project" value="UniProtKB"/>
</dbReference>
<dbReference type="InterPro" id="IPR039730">
    <property type="entry name" value="Jlp2/Ccd25"/>
</dbReference>
<dbReference type="InterPro" id="IPR008532">
    <property type="entry name" value="NFACT_RNA-bd"/>
</dbReference>
<dbReference type="PANTHER" id="PTHR13049:SF2">
    <property type="entry name" value="COILED-COIL DOMAIN-CONTAINING PROTEIN 25"/>
    <property type="match status" value="1"/>
</dbReference>
<dbReference type="PANTHER" id="PTHR13049">
    <property type="entry name" value="DUF814-RELATED"/>
    <property type="match status" value="1"/>
</dbReference>
<dbReference type="Pfam" id="PF05670">
    <property type="entry name" value="NFACT-R_1"/>
    <property type="match status" value="1"/>
</dbReference>
<proteinExistence type="evidence at protein level"/>